<dbReference type="EMBL" id="AL513382">
    <property type="protein sequence ID" value="CAD09371.1"/>
    <property type="molecule type" value="Genomic_DNA"/>
</dbReference>
<dbReference type="EMBL" id="AE014613">
    <property type="protein sequence ID" value="AAO70876.1"/>
    <property type="molecule type" value="Genomic_DNA"/>
</dbReference>
<dbReference type="RefSeq" id="NP_457802.1">
    <property type="nucleotide sequence ID" value="NC_003198.1"/>
</dbReference>
<dbReference type="RefSeq" id="WP_000141123.1">
    <property type="nucleotide sequence ID" value="NZ_WSUR01000033.1"/>
</dbReference>
<dbReference type="SMR" id="Q8Z3A8"/>
<dbReference type="STRING" id="220341.gene:17587462"/>
<dbReference type="KEGG" id="stt:t3348"/>
<dbReference type="KEGG" id="sty:STY3610"/>
<dbReference type="PATRIC" id="fig|220341.7.peg.3679"/>
<dbReference type="eggNOG" id="COG4973">
    <property type="taxonomic scope" value="Bacteria"/>
</dbReference>
<dbReference type="HOGENOM" id="CLU_027562_9_0_6"/>
<dbReference type="OMA" id="AMMELMY"/>
<dbReference type="OrthoDB" id="9801717at2"/>
<dbReference type="Proteomes" id="UP000000541">
    <property type="component" value="Chromosome"/>
</dbReference>
<dbReference type="Proteomes" id="UP000002670">
    <property type="component" value="Chromosome"/>
</dbReference>
<dbReference type="GO" id="GO:0005737">
    <property type="term" value="C:cytoplasm"/>
    <property type="evidence" value="ECO:0007669"/>
    <property type="project" value="UniProtKB-SubCell"/>
</dbReference>
<dbReference type="GO" id="GO:0003677">
    <property type="term" value="F:DNA binding"/>
    <property type="evidence" value="ECO:0007669"/>
    <property type="project" value="UniProtKB-KW"/>
</dbReference>
<dbReference type="GO" id="GO:0009037">
    <property type="term" value="F:tyrosine-based site-specific recombinase activity"/>
    <property type="evidence" value="ECO:0007669"/>
    <property type="project" value="UniProtKB-UniRule"/>
</dbReference>
<dbReference type="GO" id="GO:0051301">
    <property type="term" value="P:cell division"/>
    <property type="evidence" value="ECO:0007669"/>
    <property type="project" value="UniProtKB-KW"/>
</dbReference>
<dbReference type="GO" id="GO:0007059">
    <property type="term" value="P:chromosome segregation"/>
    <property type="evidence" value="ECO:0007669"/>
    <property type="project" value="UniProtKB-UniRule"/>
</dbReference>
<dbReference type="GO" id="GO:0006313">
    <property type="term" value="P:DNA transposition"/>
    <property type="evidence" value="ECO:0007669"/>
    <property type="project" value="UniProtKB-UniRule"/>
</dbReference>
<dbReference type="CDD" id="cd00798">
    <property type="entry name" value="INT_XerDC_C"/>
    <property type="match status" value="1"/>
</dbReference>
<dbReference type="FunFam" id="1.10.443.10:FF:000002">
    <property type="entry name" value="Tyrosine recombinase XerC"/>
    <property type="match status" value="1"/>
</dbReference>
<dbReference type="Gene3D" id="1.10.150.130">
    <property type="match status" value="1"/>
</dbReference>
<dbReference type="Gene3D" id="1.10.443.10">
    <property type="entry name" value="Intergrase catalytic core"/>
    <property type="match status" value="1"/>
</dbReference>
<dbReference type="HAMAP" id="MF_01808">
    <property type="entry name" value="Recomb_XerC_XerD"/>
    <property type="match status" value="1"/>
</dbReference>
<dbReference type="InterPro" id="IPR044068">
    <property type="entry name" value="CB"/>
</dbReference>
<dbReference type="InterPro" id="IPR011010">
    <property type="entry name" value="DNA_brk_join_enz"/>
</dbReference>
<dbReference type="InterPro" id="IPR013762">
    <property type="entry name" value="Integrase-like_cat_sf"/>
</dbReference>
<dbReference type="InterPro" id="IPR002104">
    <property type="entry name" value="Integrase_catalytic"/>
</dbReference>
<dbReference type="InterPro" id="IPR010998">
    <property type="entry name" value="Integrase_recombinase_N"/>
</dbReference>
<dbReference type="InterPro" id="IPR004107">
    <property type="entry name" value="Integrase_SAM-like_N"/>
</dbReference>
<dbReference type="InterPro" id="IPR011931">
    <property type="entry name" value="Recomb_XerC"/>
</dbReference>
<dbReference type="InterPro" id="IPR023009">
    <property type="entry name" value="Tyrosine_recombinase_XerC/XerD"/>
</dbReference>
<dbReference type="InterPro" id="IPR050090">
    <property type="entry name" value="Tyrosine_recombinase_XerCD"/>
</dbReference>
<dbReference type="NCBIfam" id="NF001399">
    <property type="entry name" value="PRK00283.1"/>
    <property type="match status" value="1"/>
</dbReference>
<dbReference type="NCBIfam" id="TIGR02224">
    <property type="entry name" value="recomb_XerC"/>
    <property type="match status" value="1"/>
</dbReference>
<dbReference type="PANTHER" id="PTHR30349">
    <property type="entry name" value="PHAGE INTEGRASE-RELATED"/>
    <property type="match status" value="1"/>
</dbReference>
<dbReference type="PANTHER" id="PTHR30349:SF81">
    <property type="entry name" value="TYROSINE RECOMBINASE XERC"/>
    <property type="match status" value="1"/>
</dbReference>
<dbReference type="Pfam" id="PF02899">
    <property type="entry name" value="Phage_int_SAM_1"/>
    <property type="match status" value="1"/>
</dbReference>
<dbReference type="Pfam" id="PF00589">
    <property type="entry name" value="Phage_integrase"/>
    <property type="match status" value="1"/>
</dbReference>
<dbReference type="SUPFAM" id="SSF56349">
    <property type="entry name" value="DNA breaking-rejoining enzymes"/>
    <property type="match status" value="1"/>
</dbReference>
<dbReference type="SUPFAM" id="SSF47823">
    <property type="entry name" value="lambda integrase-like, N-terminal domain"/>
    <property type="match status" value="1"/>
</dbReference>
<dbReference type="PROSITE" id="PS51900">
    <property type="entry name" value="CB"/>
    <property type="match status" value="1"/>
</dbReference>
<dbReference type="PROSITE" id="PS51898">
    <property type="entry name" value="TYR_RECOMBINASE"/>
    <property type="match status" value="1"/>
</dbReference>
<reference key="1">
    <citation type="journal article" date="2001" name="Nature">
        <title>Complete genome sequence of a multiple drug resistant Salmonella enterica serovar Typhi CT18.</title>
        <authorList>
            <person name="Parkhill J."/>
            <person name="Dougan G."/>
            <person name="James K.D."/>
            <person name="Thomson N.R."/>
            <person name="Pickard D."/>
            <person name="Wain J."/>
            <person name="Churcher C.M."/>
            <person name="Mungall K.L."/>
            <person name="Bentley S.D."/>
            <person name="Holden M.T.G."/>
            <person name="Sebaihia M."/>
            <person name="Baker S."/>
            <person name="Basham D."/>
            <person name="Brooks K."/>
            <person name="Chillingworth T."/>
            <person name="Connerton P."/>
            <person name="Cronin A."/>
            <person name="Davis P."/>
            <person name="Davies R.M."/>
            <person name="Dowd L."/>
            <person name="White N."/>
            <person name="Farrar J."/>
            <person name="Feltwell T."/>
            <person name="Hamlin N."/>
            <person name="Haque A."/>
            <person name="Hien T.T."/>
            <person name="Holroyd S."/>
            <person name="Jagels K."/>
            <person name="Krogh A."/>
            <person name="Larsen T.S."/>
            <person name="Leather S."/>
            <person name="Moule S."/>
            <person name="O'Gaora P."/>
            <person name="Parry C."/>
            <person name="Quail M.A."/>
            <person name="Rutherford K.M."/>
            <person name="Simmonds M."/>
            <person name="Skelton J."/>
            <person name="Stevens K."/>
            <person name="Whitehead S."/>
            <person name="Barrell B.G."/>
        </authorList>
    </citation>
    <scope>NUCLEOTIDE SEQUENCE [LARGE SCALE GENOMIC DNA]</scope>
    <source>
        <strain>CT18</strain>
    </source>
</reference>
<reference key="2">
    <citation type="journal article" date="2003" name="J. Bacteriol.">
        <title>Comparative genomics of Salmonella enterica serovar Typhi strains Ty2 and CT18.</title>
        <authorList>
            <person name="Deng W."/>
            <person name="Liou S.-R."/>
            <person name="Plunkett G. III"/>
            <person name="Mayhew G.F."/>
            <person name="Rose D.J."/>
            <person name="Burland V."/>
            <person name="Kodoyianni V."/>
            <person name="Schwartz D.C."/>
            <person name="Blattner F.R."/>
        </authorList>
    </citation>
    <scope>NUCLEOTIDE SEQUENCE [LARGE SCALE GENOMIC DNA]</scope>
    <source>
        <strain>ATCC 700931 / Ty2</strain>
    </source>
</reference>
<gene>
    <name evidence="1" type="primary">xerC</name>
    <name type="ordered locus">STY3610</name>
    <name type="ordered locus">t3348</name>
</gene>
<accession>Q8Z3A8</accession>
<evidence type="ECO:0000255" key="1">
    <source>
        <dbReference type="HAMAP-Rule" id="MF_01808"/>
    </source>
</evidence>
<evidence type="ECO:0000255" key="2">
    <source>
        <dbReference type="PROSITE-ProRule" id="PRU01246"/>
    </source>
</evidence>
<evidence type="ECO:0000255" key="3">
    <source>
        <dbReference type="PROSITE-ProRule" id="PRU01248"/>
    </source>
</evidence>
<name>XERC_SALTI</name>
<protein>
    <recommendedName>
        <fullName evidence="1">Tyrosine recombinase XerC</fullName>
    </recommendedName>
</protein>
<comment type="function">
    <text evidence="1">Site-specific tyrosine recombinase, which acts by catalyzing the cutting and rejoining of the recombining DNA molecules. Binds cooperatively to specific DNA consensus sequences that are separated from XerD binding sites by a short central region, forming the heterotetrameric XerC-XerD complex that recombines DNA substrates. The complex is essential to convert dimers of the bacterial chromosome into monomers to permit their segregation at cell division. It also contributes to the segregational stability of plasmids. In the complex XerC specifically exchanges the top DNA strands.</text>
</comment>
<comment type="activity regulation">
    <text evidence="1">FtsK may regulate the catalytic switch between XerC and XerD in the heterotetrameric complex during the two steps of the recombination process.</text>
</comment>
<comment type="subunit">
    <text evidence="1">Forms a cyclic heterotetrameric complex composed of two molecules of XerC and two molecules of XerD, in which XerC interacts with XerD via its C-terminal region, XerD interacts with XerC via its C-terminal region and so on.</text>
</comment>
<comment type="subcellular location">
    <subcellularLocation>
        <location evidence="1">Cytoplasm</location>
    </subcellularLocation>
</comment>
<comment type="similarity">
    <text evidence="1">Belongs to the 'phage' integrase family. XerC subfamily.</text>
</comment>
<organism>
    <name type="scientific">Salmonella typhi</name>
    <dbReference type="NCBI Taxonomy" id="90370"/>
    <lineage>
        <taxon>Bacteria</taxon>
        <taxon>Pseudomonadati</taxon>
        <taxon>Pseudomonadota</taxon>
        <taxon>Gammaproteobacteria</taxon>
        <taxon>Enterobacterales</taxon>
        <taxon>Enterobacteriaceae</taxon>
        <taxon>Salmonella</taxon>
    </lineage>
</organism>
<sequence>MTEVALSLDVSRFLRYLGVERQLSPITLQNYQRQLDAIIALAGETGLKSWQQCDAAIVRSFAVRSRRKGLGPASLALRLSALRSFFDWLVSQGELKANPAKGVSAPKAPRHLPKNIDVDDVNRLLDIDLNDPLAVRDRAMLEVMYGAGLRLSELVGLDIKHLDLDTGEVWVMGKGSKERRLPIGRNAVTWIEHWLDLRGLFASDEEALFLSKLGKRISARNVQKRFAEWGIKQGLNSHVHPHKLRHSFATHMLESSGDLRGVQELLGHANLSTTQIYTHLDFQHLASVYDAAHPRAKRGK</sequence>
<feature type="chain" id="PRO_0000095324" description="Tyrosine recombinase XerC">
    <location>
        <begin position="1"/>
        <end position="300"/>
    </location>
</feature>
<feature type="domain" description="Core-binding (CB)" evidence="3">
    <location>
        <begin position="4"/>
        <end position="90"/>
    </location>
</feature>
<feature type="domain" description="Tyr recombinase" evidence="2">
    <location>
        <begin position="111"/>
        <end position="290"/>
    </location>
</feature>
<feature type="active site" evidence="1">
    <location>
        <position position="150"/>
    </location>
</feature>
<feature type="active site" evidence="1">
    <location>
        <position position="174"/>
    </location>
</feature>
<feature type="active site" evidence="1">
    <location>
        <position position="242"/>
    </location>
</feature>
<feature type="active site" evidence="1">
    <location>
        <position position="245"/>
    </location>
</feature>
<feature type="active site" evidence="1">
    <location>
        <position position="268"/>
    </location>
</feature>
<feature type="active site" description="O-(3'-phospho-DNA)-tyrosine intermediate" evidence="1">
    <location>
        <position position="277"/>
    </location>
</feature>
<proteinExistence type="inferred from homology"/>
<keyword id="KW-0131">Cell cycle</keyword>
<keyword id="KW-0132">Cell division</keyword>
<keyword id="KW-0159">Chromosome partition</keyword>
<keyword id="KW-0963">Cytoplasm</keyword>
<keyword id="KW-0229">DNA integration</keyword>
<keyword id="KW-0233">DNA recombination</keyword>
<keyword id="KW-0238">DNA-binding</keyword>